<evidence type="ECO:0000255" key="1">
    <source>
        <dbReference type="HAMAP-Rule" id="MF_00185"/>
    </source>
</evidence>
<organism>
    <name type="scientific">Nitrosococcus oceani (strain ATCC 19707 / BCRC 17464 / JCM 30415 / NCIMB 11848 / C-107)</name>
    <dbReference type="NCBI Taxonomy" id="323261"/>
    <lineage>
        <taxon>Bacteria</taxon>
        <taxon>Pseudomonadati</taxon>
        <taxon>Pseudomonadota</taxon>
        <taxon>Gammaproteobacteria</taxon>
        <taxon>Chromatiales</taxon>
        <taxon>Chromatiaceae</taxon>
        <taxon>Nitrosococcus</taxon>
    </lineage>
</organism>
<comment type="function">
    <text evidence="1">Catalyzes the transfer of a dimethylallyl group onto the adenine at position 37 in tRNAs that read codons beginning with uridine, leading to the formation of N6-(dimethylallyl)adenosine (i(6)A).</text>
</comment>
<comment type="catalytic activity">
    <reaction evidence="1">
        <text>adenosine(37) in tRNA + dimethylallyl diphosphate = N(6)-dimethylallyladenosine(37) in tRNA + diphosphate</text>
        <dbReference type="Rhea" id="RHEA:26482"/>
        <dbReference type="Rhea" id="RHEA-COMP:10162"/>
        <dbReference type="Rhea" id="RHEA-COMP:10375"/>
        <dbReference type="ChEBI" id="CHEBI:33019"/>
        <dbReference type="ChEBI" id="CHEBI:57623"/>
        <dbReference type="ChEBI" id="CHEBI:74411"/>
        <dbReference type="ChEBI" id="CHEBI:74415"/>
        <dbReference type="EC" id="2.5.1.75"/>
    </reaction>
</comment>
<comment type="cofactor">
    <cofactor evidence="1">
        <name>Mg(2+)</name>
        <dbReference type="ChEBI" id="CHEBI:18420"/>
    </cofactor>
</comment>
<comment type="subunit">
    <text evidence="1">Monomer.</text>
</comment>
<comment type="similarity">
    <text evidence="1">Belongs to the IPP transferase family.</text>
</comment>
<proteinExistence type="inferred from homology"/>
<keyword id="KW-0067">ATP-binding</keyword>
<keyword id="KW-0460">Magnesium</keyword>
<keyword id="KW-0547">Nucleotide-binding</keyword>
<keyword id="KW-1185">Reference proteome</keyword>
<keyword id="KW-0808">Transferase</keyword>
<keyword id="KW-0819">tRNA processing</keyword>
<sequence length="314" mass="35582">MFIRPPAVFLMGPTASGKTELALALAERLSCEIISVDSAQVYCGMDIGTAKPSLALRHRYPHHLIDILDPAETYSAGRFRADALTLMKAISKRGRIPLLVGGTMLYFHALTYGISPLPPADPEVRAAIDREANMKGWKALHRRLAELDPMAAQRIHHHDPQRIQRALEVFQLTGRPLSELIANSRESELPYRVIKLILAPAERIVLHSRIERRFRAMLKAGFLEEVKGLFMRPDLSLGHSSIRAVGYRQAWLYLQDQFSFPTMAEQAISATRQMAKRQLTWLRRESNAIHVDPEEKDHVEQAWRQLEMALVQAS</sequence>
<protein>
    <recommendedName>
        <fullName evidence="1">tRNA dimethylallyltransferase</fullName>
        <ecNumber evidence="1">2.5.1.75</ecNumber>
    </recommendedName>
    <alternativeName>
        <fullName evidence="1">Dimethylallyl diphosphate:tRNA dimethylallyltransferase</fullName>
        <shortName evidence="1">DMAPP:tRNA dimethylallyltransferase</shortName>
        <shortName evidence="1">DMATase</shortName>
    </alternativeName>
    <alternativeName>
        <fullName evidence="1">Isopentenyl-diphosphate:tRNA isopentenyltransferase</fullName>
        <shortName evidence="1">IPP transferase</shortName>
        <shortName evidence="1">IPPT</shortName>
        <shortName evidence="1">IPTase</shortName>
    </alternativeName>
</protein>
<feature type="chain" id="PRO_1000020627" description="tRNA dimethylallyltransferase">
    <location>
        <begin position="1"/>
        <end position="314"/>
    </location>
</feature>
<feature type="region of interest" description="Interaction with substrate tRNA" evidence="1">
    <location>
        <begin position="37"/>
        <end position="40"/>
    </location>
</feature>
<feature type="region of interest" description="Interaction with substrate tRNA" evidence="1">
    <location>
        <begin position="161"/>
        <end position="165"/>
    </location>
</feature>
<feature type="binding site" evidence="1">
    <location>
        <begin position="12"/>
        <end position="19"/>
    </location>
    <ligand>
        <name>ATP</name>
        <dbReference type="ChEBI" id="CHEBI:30616"/>
    </ligand>
</feature>
<feature type="binding site" evidence="1">
    <location>
        <begin position="14"/>
        <end position="19"/>
    </location>
    <ligand>
        <name>substrate</name>
    </ligand>
</feature>
<feature type="site" description="Interaction with substrate tRNA" evidence="1">
    <location>
        <position position="103"/>
    </location>
</feature>
<feature type="site" description="Interaction with substrate tRNA" evidence="1">
    <location>
        <position position="125"/>
    </location>
</feature>
<reference key="1">
    <citation type="journal article" date="2006" name="Appl. Environ. Microbiol.">
        <title>Complete genome sequence of the marine, chemolithoautotrophic, ammonia-oxidizing bacterium Nitrosococcus oceani ATCC 19707.</title>
        <authorList>
            <person name="Klotz M.G."/>
            <person name="Arp D.J."/>
            <person name="Chain P.S.G."/>
            <person name="El-Sheikh A.F."/>
            <person name="Hauser L.J."/>
            <person name="Hommes N.G."/>
            <person name="Larimer F.W."/>
            <person name="Malfatti S.A."/>
            <person name="Norton J.M."/>
            <person name="Poret-Peterson A.T."/>
            <person name="Vergez L.M."/>
            <person name="Ward B.B."/>
        </authorList>
    </citation>
    <scope>NUCLEOTIDE SEQUENCE [LARGE SCALE GENOMIC DNA]</scope>
    <source>
        <strain>ATCC 19707 / BCRC 17464 / JCM 30415 / NCIMB 11848 / C-107</strain>
    </source>
</reference>
<accession>Q3J802</accession>
<gene>
    <name evidence="1" type="primary">miaA</name>
    <name type="ordered locus">Noc_2591</name>
</gene>
<name>MIAA_NITOC</name>
<dbReference type="EC" id="2.5.1.75" evidence="1"/>
<dbReference type="EMBL" id="CP000127">
    <property type="protein sequence ID" value="ABA59044.1"/>
    <property type="molecule type" value="Genomic_DNA"/>
</dbReference>
<dbReference type="RefSeq" id="WP_004269116.1">
    <property type="nucleotide sequence ID" value="NC_007484.1"/>
</dbReference>
<dbReference type="SMR" id="Q3J802"/>
<dbReference type="FunCoup" id="Q3J802">
    <property type="interactions" value="493"/>
</dbReference>
<dbReference type="STRING" id="323261.Noc_2591"/>
<dbReference type="KEGG" id="noc:Noc_2591"/>
<dbReference type="eggNOG" id="COG0324">
    <property type="taxonomic scope" value="Bacteria"/>
</dbReference>
<dbReference type="HOGENOM" id="CLU_032616_0_0_6"/>
<dbReference type="InParanoid" id="Q3J802"/>
<dbReference type="Proteomes" id="UP000006838">
    <property type="component" value="Chromosome"/>
</dbReference>
<dbReference type="GO" id="GO:0005524">
    <property type="term" value="F:ATP binding"/>
    <property type="evidence" value="ECO:0007669"/>
    <property type="project" value="UniProtKB-UniRule"/>
</dbReference>
<dbReference type="GO" id="GO:0052381">
    <property type="term" value="F:tRNA dimethylallyltransferase activity"/>
    <property type="evidence" value="ECO:0007669"/>
    <property type="project" value="UniProtKB-UniRule"/>
</dbReference>
<dbReference type="GO" id="GO:0006400">
    <property type="term" value="P:tRNA modification"/>
    <property type="evidence" value="ECO:0007669"/>
    <property type="project" value="TreeGrafter"/>
</dbReference>
<dbReference type="FunFam" id="1.10.20.140:FF:000001">
    <property type="entry name" value="tRNA dimethylallyltransferase"/>
    <property type="match status" value="1"/>
</dbReference>
<dbReference type="Gene3D" id="1.10.20.140">
    <property type="match status" value="1"/>
</dbReference>
<dbReference type="Gene3D" id="3.40.50.300">
    <property type="entry name" value="P-loop containing nucleotide triphosphate hydrolases"/>
    <property type="match status" value="1"/>
</dbReference>
<dbReference type="HAMAP" id="MF_00185">
    <property type="entry name" value="IPP_trans"/>
    <property type="match status" value="1"/>
</dbReference>
<dbReference type="InterPro" id="IPR039657">
    <property type="entry name" value="Dimethylallyltransferase"/>
</dbReference>
<dbReference type="InterPro" id="IPR018022">
    <property type="entry name" value="IPT"/>
</dbReference>
<dbReference type="InterPro" id="IPR027417">
    <property type="entry name" value="P-loop_NTPase"/>
</dbReference>
<dbReference type="NCBIfam" id="TIGR00174">
    <property type="entry name" value="miaA"/>
    <property type="match status" value="1"/>
</dbReference>
<dbReference type="PANTHER" id="PTHR11088">
    <property type="entry name" value="TRNA DIMETHYLALLYLTRANSFERASE"/>
    <property type="match status" value="1"/>
</dbReference>
<dbReference type="PANTHER" id="PTHR11088:SF60">
    <property type="entry name" value="TRNA DIMETHYLALLYLTRANSFERASE"/>
    <property type="match status" value="1"/>
</dbReference>
<dbReference type="Pfam" id="PF01715">
    <property type="entry name" value="IPPT"/>
    <property type="match status" value="1"/>
</dbReference>
<dbReference type="SUPFAM" id="SSF52540">
    <property type="entry name" value="P-loop containing nucleoside triphosphate hydrolases"/>
    <property type="match status" value="1"/>
</dbReference>